<proteinExistence type="inferred from homology"/>
<gene>
    <name evidence="1" type="primary">pfdA2</name>
    <name type="ordered locus">TK1121</name>
</gene>
<accession>Q5JE63</accession>
<evidence type="ECO:0000255" key="1">
    <source>
        <dbReference type="HAMAP-Rule" id="MF_00308"/>
    </source>
</evidence>
<evidence type="ECO:0000305" key="2"/>
<dbReference type="EMBL" id="AP006878">
    <property type="protein sequence ID" value="BAD85310.1"/>
    <property type="molecule type" value="Genomic_DNA"/>
</dbReference>
<dbReference type="SMR" id="Q5JE63"/>
<dbReference type="STRING" id="69014.TK1121"/>
<dbReference type="EnsemblBacteria" id="BAD85310">
    <property type="protein sequence ID" value="BAD85310"/>
    <property type="gene ID" value="TK1121"/>
</dbReference>
<dbReference type="KEGG" id="tko:TK1121"/>
<dbReference type="PATRIC" id="fig|69014.16.peg.1098"/>
<dbReference type="eggNOG" id="arCOG01341">
    <property type="taxonomic scope" value="Archaea"/>
</dbReference>
<dbReference type="HOGENOM" id="CLU_091867_1_3_2"/>
<dbReference type="InParanoid" id="Q5JE63"/>
<dbReference type="OrthoDB" id="10045at2157"/>
<dbReference type="PhylomeDB" id="Q5JE63"/>
<dbReference type="Proteomes" id="UP000000536">
    <property type="component" value="Chromosome"/>
</dbReference>
<dbReference type="GO" id="GO:0005737">
    <property type="term" value="C:cytoplasm"/>
    <property type="evidence" value="ECO:0000318"/>
    <property type="project" value="GO_Central"/>
</dbReference>
<dbReference type="GO" id="GO:0016272">
    <property type="term" value="C:prefoldin complex"/>
    <property type="evidence" value="ECO:0000318"/>
    <property type="project" value="GO_Central"/>
</dbReference>
<dbReference type="GO" id="GO:0051082">
    <property type="term" value="F:unfolded protein binding"/>
    <property type="evidence" value="ECO:0007669"/>
    <property type="project" value="UniProtKB-UniRule"/>
</dbReference>
<dbReference type="GO" id="GO:0006457">
    <property type="term" value="P:protein folding"/>
    <property type="evidence" value="ECO:0007669"/>
    <property type="project" value="UniProtKB-UniRule"/>
</dbReference>
<dbReference type="CDD" id="cd23160">
    <property type="entry name" value="Prefoldin_alpha_GimC"/>
    <property type="match status" value="1"/>
</dbReference>
<dbReference type="FunFam" id="1.10.287.370:FF:000027">
    <property type="entry name" value="Prefoldin subunit alpha 1"/>
    <property type="match status" value="1"/>
</dbReference>
<dbReference type="Gene3D" id="1.10.287.370">
    <property type="match status" value="1"/>
</dbReference>
<dbReference type="HAMAP" id="MF_00308">
    <property type="entry name" value="PfdA"/>
    <property type="match status" value="1"/>
</dbReference>
<dbReference type="InterPro" id="IPR011599">
    <property type="entry name" value="PFD_alpha_archaea"/>
</dbReference>
<dbReference type="InterPro" id="IPR009053">
    <property type="entry name" value="Prefoldin"/>
</dbReference>
<dbReference type="InterPro" id="IPR004127">
    <property type="entry name" value="Prefoldin_subunit_alpha"/>
</dbReference>
<dbReference type="NCBIfam" id="TIGR00293">
    <property type="entry name" value="prefoldin subunit alpha"/>
    <property type="match status" value="1"/>
</dbReference>
<dbReference type="PANTHER" id="PTHR12674">
    <property type="entry name" value="PREFOLDIN SUBUNIT 5"/>
    <property type="match status" value="1"/>
</dbReference>
<dbReference type="PANTHER" id="PTHR12674:SF4">
    <property type="entry name" value="PREFOLDIN SUBUNIT ALPHA 2"/>
    <property type="match status" value="1"/>
</dbReference>
<dbReference type="Pfam" id="PF02996">
    <property type="entry name" value="Prefoldin"/>
    <property type="match status" value="1"/>
</dbReference>
<dbReference type="SUPFAM" id="SSF46579">
    <property type="entry name" value="Prefoldin"/>
    <property type="match status" value="1"/>
</dbReference>
<feature type="chain" id="PRO_0000153686" description="Prefoldin subunit alpha 2">
    <location>
        <begin position="1"/>
        <end position="142"/>
    </location>
</feature>
<sequence>MAEEKKTRTLEQIQDEIRSYLGEIEYLRSQVGVIDATITDLRTVDATLAYLKEKGKGKEIYIPLGSGVAIRGKIENPDDVIMDVGAGILVGATVDEARENIEKRIKALMDLRLALLRKIEEDTRKVNELLKELQEMQPEKRE</sequence>
<protein>
    <recommendedName>
        <fullName evidence="1">Prefoldin subunit alpha 2</fullName>
    </recommendedName>
    <alternativeName>
        <fullName evidence="1">GimC subunit alpha 2</fullName>
    </alternativeName>
</protein>
<comment type="function">
    <text evidence="1">Molecular chaperone capable of stabilizing a range of proteins. Seems to fulfill an ATP-independent, HSP70-like function in archaeal de novo protein folding.</text>
</comment>
<comment type="subunit">
    <text evidence="1">Heterohexamer of two alpha and four beta subunits.</text>
</comment>
<comment type="subcellular location">
    <subcellularLocation>
        <location evidence="1">Cytoplasm</location>
    </subcellularLocation>
</comment>
<comment type="similarity">
    <text evidence="2">Belongs to the prefoldin subunit alpha family.</text>
</comment>
<name>PFDA2_THEKO</name>
<organism>
    <name type="scientific">Thermococcus kodakarensis (strain ATCC BAA-918 / JCM 12380 / KOD1)</name>
    <name type="common">Pyrococcus kodakaraensis (strain KOD1)</name>
    <dbReference type="NCBI Taxonomy" id="69014"/>
    <lineage>
        <taxon>Archaea</taxon>
        <taxon>Methanobacteriati</taxon>
        <taxon>Methanobacteriota</taxon>
        <taxon>Thermococci</taxon>
        <taxon>Thermococcales</taxon>
        <taxon>Thermococcaceae</taxon>
        <taxon>Thermococcus</taxon>
    </lineage>
</organism>
<keyword id="KW-0143">Chaperone</keyword>
<keyword id="KW-0963">Cytoplasm</keyword>
<keyword id="KW-1185">Reference proteome</keyword>
<reference key="1">
    <citation type="journal article" date="2005" name="Genome Res.">
        <title>Complete genome sequence of the hyperthermophilic archaeon Thermococcus kodakaraensis KOD1 and comparison with Pyrococcus genomes.</title>
        <authorList>
            <person name="Fukui T."/>
            <person name="Atomi H."/>
            <person name="Kanai T."/>
            <person name="Matsumi R."/>
            <person name="Fujiwara S."/>
            <person name="Imanaka T."/>
        </authorList>
    </citation>
    <scope>NUCLEOTIDE SEQUENCE [LARGE SCALE GENOMIC DNA]</scope>
    <source>
        <strain>ATCC BAA-918 / JCM 12380 / KOD1</strain>
    </source>
</reference>